<sequence length="132" mass="14579">MSKTLNIIWQYLRAFVLIYACLYAGIFIASLLPVTIPGSIIGMLILFVLLALQILPAKWVNPGCYVLIRYMALLFVPIGVGVMQYFDLLRAQFGPVVVSCAVSTLVVFLVVSWSSQLVHGERKVVGQKGSEE</sequence>
<dbReference type="EMBL" id="CP000038">
    <property type="protein sequence ID" value="AAZ88848.1"/>
    <property type="molecule type" value="Genomic_DNA"/>
</dbReference>
<dbReference type="RefSeq" id="WP_001295452.1">
    <property type="nucleotide sequence ID" value="NC_007384.1"/>
</dbReference>
<dbReference type="SMR" id="Q3Z064"/>
<dbReference type="KEGG" id="ssn:SSON_2197"/>
<dbReference type="HOGENOM" id="CLU_113736_1_1_6"/>
<dbReference type="Proteomes" id="UP000002529">
    <property type="component" value="Chromosome"/>
</dbReference>
<dbReference type="GO" id="GO:0005886">
    <property type="term" value="C:plasma membrane"/>
    <property type="evidence" value="ECO:0007669"/>
    <property type="project" value="UniProtKB-SubCell"/>
</dbReference>
<dbReference type="HAMAP" id="MF_01144">
    <property type="entry name" value="UPF0299"/>
    <property type="match status" value="1"/>
</dbReference>
<dbReference type="InterPro" id="IPR005538">
    <property type="entry name" value="LrgA/CidA"/>
</dbReference>
<dbReference type="InterPro" id="IPR022957">
    <property type="entry name" value="Uncharacterised_UPF0299"/>
</dbReference>
<dbReference type="NCBIfam" id="NF002494">
    <property type="entry name" value="PRK01821.1"/>
    <property type="match status" value="1"/>
</dbReference>
<dbReference type="PANTHER" id="PTHR33931">
    <property type="entry name" value="HOLIN-LIKE PROTEIN CIDA-RELATED"/>
    <property type="match status" value="1"/>
</dbReference>
<dbReference type="PANTHER" id="PTHR33931:SF5">
    <property type="entry name" value="UPF0299 MEMBRANE PROTEIN YOHJ"/>
    <property type="match status" value="1"/>
</dbReference>
<dbReference type="Pfam" id="PF03788">
    <property type="entry name" value="LrgA"/>
    <property type="match status" value="1"/>
</dbReference>
<protein>
    <recommendedName>
        <fullName evidence="1">UPF0299 membrane protein YohJ</fullName>
    </recommendedName>
</protein>
<proteinExistence type="inferred from homology"/>
<accession>Q3Z064</accession>
<organism>
    <name type="scientific">Shigella sonnei (strain Ss046)</name>
    <dbReference type="NCBI Taxonomy" id="300269"/>
    <lineage>
        <taxon>Bacteria</taxon>
        <taxon>Pseudomonadati</taxon>
        <taxon>Pseudomonadota</taxon>
        <taxon>Gammaproteobacteria</taxon>
        <taxon>Enterobacterales</taxon>
        <taxon>Enterobacteriaceae</taxon>
        <taxon>Shigella</taxon>
    </lineage>
</organism>
<keyword id="KW-0997">Cell inner membrane</keyword>
<keyword id="KW-1003">Cell membrane</keyword>
<keyword id="KW-0472">Membrane</keyword>
<keyword id="KW-1185">Reference proteome</keyword>
<keyword id="KW-0812">Transmembrane</keyword>
<keyword id="KW-1133">Transmembrane helix</keyword>
<reference key="1">
    <citation type="journal article" date="2005" name="Nucleic Acids Res.">
        <title>Genome dynamics and diversity of Shigella species, the etiologic agents of bacillary dysentery.</title>
        <authorList>
            <person name="Yang F."/>
            <person name="Yang J."/>
            <person name="Zhang X."/>
            <person name="Chen L."/>
            <person name="Jiang Y."/>
            <person name="Yan Y."/>
            <person name="Tang X."/>
            <person name="Wang J."/>
            <person name="Xiong Z."/>
            <person name="Dong J."/>
            <person name="Xue Y."/>
            <person name="Zhu Y."/>
            <person name="Xu X."/>
            <person name="Sun L."/>
            <person name="Chen S."/>
            <person name="Nie H."/>
            <person name="Peng J."/>
            <person name="Xu J."/>
            <person name="Wang Y."/>
            <person name="Yuan Z."/>
            <person name="Wen Y."/>
            <person name="Yao Z."/>
            <person name="Shen Y."/>
            <person name="Qiang B."/>
            <person name="Hou Y."/>
            <person name="Yu J."/>
            <person name="Jin Q."/>
        </authorList>
    </citation>
    <scope>NUCLEOTIDE SEQUENCE [LARGE SCALE GENOMIC DNA]</scope>
    <source>
        <strain>Ss046</strain>
    </source>
</reference>
<evidence type="ECO:0000255" key="1">
    <source>
        <dbReference type="HAMAP-Rule" id="MF_01144"/>
    </source>
</evidence>
<feature type="chain" id="PRO_1000065468" description="UPF0299 membrane protein YohJ">
    <location>
        <begin position="1"/>
        <end position="132"/>
    </location>
</feature>
<feature type="transmembrane region" description="Helical" evidence="1">
    <location>
        <begin position="7"/>
        <end position="27"/>
    </location>
</feature>
<feature type="transmembrane region" description="Helical" evidence="1">
    <location>
        <begin position="31"/>
        <end position="51"/>
    </location>
</feature>
<feature type="transmembrane region" description="Helical" evidence="1">
    <location>
        <begin position="63"/>
        <end position="83"/>
    </location>
</feature>
<feature type="transmembrane region" description="Helical" evidence="1">
    <location>
        <begin position="93"/>
        <end position="113"/>
    </location>
</feature>
<comment type="subcellular location">
    <subcellularLocation>
        <location evidence="1">Cell inner membrane</location>
        <topology evidence="1">Multi-pass membrane protein</topology>
    </subcellularLocation>
</comment>
<comment type="similarity">
    <text evidence="1">Belongs to the UPF0299 family.</text>
</comment>
<name>YOHJ_SHISS</name>
<gene>
    <name evidence="1" type="primary">yohJ</name>
    <name type="ordered locus">SSON_2197</name>
</gene>